<sequence length="327" mass="36802">MSHLAELVASAKAAISQASDVAALDNVRVEYLGKKGHLTLQMTTLRELPPEERPAAGAVINEAKEQVQQALNARKAELESAALNARLAAETIDVSLPGRRIENGGLHPVTRTIDRIESFFGELGFTVATGPEIEDDYHNFDALNIPGHHPARADHDTFWFDATRLLRTQTSGVQIRTMKAQQPPIRIIAPGRVYRNDYDQTHTPMFHQMEGLIVDTNISFTNLKGTLHDFLRNFFEEDLQIRFRPSYFPFTEPSAEVDVMGKNGKWLEVLGCGMVHPNVLRNVGIDPEVYSGFAFGMGMERLTMLRYGVTDLRSFFENDLRFLKQFK</sequence>
<feature type="chain" id="PRO_1000114869" description="Phenylalanine--tRNA ligase alpha subunit">
    <location>
        <begin position="1"/>
        <end position="327"/>
    </location>
</feature>
<feature type="binding site" evidence="1">
    <location>
        <position position="252"/>
    </location>
    <ligand>
        <name>Mg(2+)</name>
        <dbReference type="ChEBI" id="CHEBI:18420"/>
        <note>shared with beta subunit</note>
    </ligand>
</feature>
<reference key="1">
    <citation type="journal article" date="2011" name="Proc. Natl. Acad. Sci. U.S.A.">
        <title>Genomic anatomy of Escherichia coli O157:H7 outbreaks.</title>
        <authorList>
            <person name="Eppinger M."/>
            <person name="Mammel M.K."/>
            <person name="Leclerc J.E."/>
            <person name="Ravel J."/>
            <person name="Cebula T.A."/>
        </authorList>
    </citation>
    <scope>NUCLEOTIDE SEQUENCE [LARGE SCALE GENOMIC DNA]</scope>
    <source>
        <strain>EC4115 / EHEC</strain>
    </source>
</reference>
<organism>
    <name type="scientific">Escherichia coli O157:H7 (strain EC4115 / EHEC)</name>
    <dbReference type="NCBI Taxonomy" id="444450"/>
    <lineage>
        <taxon>Bacteria</taxon>
        <taxon>Pseudomonadati</taxon>
        <taxon>Pseudomonadota</taxon>
        <taxon>Gammaproteobacteria</taxon>
        <taxon>Enterobacterales</taxon>
        <taxon>Enterobacteriaceae</taxon>
        <taxon>Escherichia</taxon>
    </lineage>
</organism>
<evidence type="ECO:0000255" key="1">
    <source>
        <dbReference type="HAMAP-Rule" id="MF_00281"/>
    </source>
</evidence>
<dbReference type="EC" id="6.1.1.20" evidence="1"/>
<dbReference type="EMBL" id="CP001164">
    <property type="protein sequence ID" value="ACI36473.1"/>
    <property type="molecule type" value="Genomic_DNA"/>
</dbReference>
<dbReference type="RefSeq" id="WP_000018588.1">
    <property type="nucleotide sequence ID" value="NC_011353.1"/>
</dbReference>
<dbReference type="SMR" id="B5YQ02"/>
<dbReference type="GeneID" id="86946239"/>
<dbReference type="KEGG" id="ecf:ECH74115_2432"/>
<dbReference type="HOGENOM" id="CLU_025086_0_1_6"/>
<dbReference type="GO" id="GO:0005737">
    <property type="term" value="C:cytoplasm"/>
    <property type="evidence" value="ECO:0007669"/>
    <property type="project" value="UniProtKB-SubCell"/>
</dbReference>
<dbReference type="GO" id="GO:0005524">
    <property type="term" value="F:ATP binding"/>
    <property type="evidence" value="ECO:0007669"/>
    <property type="project" value="UniProtKB-UniRule"/>
</dbReference>
<dbReference type="GO" id="GO:0000287">
    <property type="term" value="F:magnesium ion binding"/>
    <property type="evidence" value="ECO:0007669"/>
    <property type="project" value="UniProtKB-UniRule"/>
</dbReference>
<dbReference type="GO" id="GO:0004826">
    <property type="term" value="F:phenylalanine-tRNA ligase activity"/>
    <property type="evidence" value="ECO:0007669"/>
    <property type="project" value="UniProtKB-UniRule"/>
</dbReference>
<dbReference type="GO" id="GO:0000049">
    <property type="term" value="F:tRNA binding"/>
    <property type="evidence" value="ECO:0007669"/>
    <property type="project" value="InterPro"/>
</dbReference>
<dbReference type="GO" id="GO:0006432">
    <property type="term" value="P:phenylalanyl-tRNA aminoacylation"/>
    <property type="evidence" value="ECO:0007669"/>
    <property type="project" value="UniProtKB-UniRule"/>
</dbReference>
<dbReference type="CDD" id="cd00496">
    <property type="entry name" value="PheRS_alpha_core"/>
    <property type="match status" value="1"/>
</dbReference>
<dbReference type="FunFam" id="3.30.930.10:FF:000003">
    <property type="entry name" value="Phenylalanine--tRNA ligase alpha subunit"/>
    <property type="match status" value="1"/>
</dbReference>
<dbReference type="Gene3D" id="3.30.930.10">
    <property type="entry name" value="Bira Bifunctional Protein, Domain 2"/>
    <property type="match status" value="1"/>
</dbReference>
<dbReference type="HAMAP" id="MF_00281">
    <property type="entry name" value="Phe_tRNA_synth_alpha1"/>
    <property type="match status" value="1"/>
</dbReference>
<dbReference type="InterPro" id="IPR006195">
    <property type="entry name" value="aa-tRNA-synth_II"/>
</dbReference>
<dbReference type="InterPro" id="IPR045864">
    <property type="entry name" value="aa-tRNA-synth_II/BPL/LPL"/>
</dbReference>
<dbReference type="InterPro" id="IPR004529">
    <property type="entry name" value="Phe-tRNA-synth_IIc_asu"/>
</dbReference>
<dbReference type="InterPro" id="IPR004188">
    <property type="entry name" value="Phe-tRNA_ligase_II_N"/>
</dbReference>
<dbReference type="InterPro" id="IPR022911">
    <property type="entry name" value="Phe_tRNA_ligase_alpha1_bac"/>
</dbReference>
<dbReference type="InterPro" id="IPR002319">
    <property type="entry name" value="Phenylalanyl-tRNA_Synthase"/>
</dbReference>
<dbReference type="InterPro" id="IPR010978">
    <property type="entry name" value="tRNA-bd_arm"/>
</dbReference>
<dbReference type="NCBIfam" id="TIGR00468">
    <property type="entry name" value="pheS"/>
    <property type="match status" value="1"/>
</dbReference>
<dbReference type="PANTHER" id="PTHR11538:SF41">
    <property type="entry name" value="PHENYLALANINE--TRNA LIGASE, MITOCHONDRIAL"/>
    <property type="match status" value="1"/>
</dbReference>
<dbReference type="PANTHER" id="PTHR11538">
    <property type="entry name" value="PHENYLALANYL-TRNA SYNTHETASE"/>
    <property type="match status" value="1"/>
</dbReference>
<dbReference type="Pfam" id="PF02912">
    <property type="entry name" value="Phe_tRNA-synt_N"/>
    <property type="match status" value="1"/>
</dbReference>
<dbReference type="Pfam" id="PF01409">
    <property type="entry name" value="tRNA-synt_2d"/>
    <property type="match status" value="1"/>
</dbReference>
<dbReference type="SUPFAM" id="SSF55681">
    <property type="entry name" value="Class II aaRS and biotin synthetases"/>
    <property type="match status" value="1"/>
</dbReference>
<dbReference type="SUPFAM" id="SSF46589">
    <property type="entry name" value="tRNA-binding arm"/>
    <property type="match status" value="1"/>
</dbReference>
<dbReference type="PROSITE" id="PS50862">
    <property type="entry name" value="AA_TRNA_LIGASE_II"/>
    <property type="match status" value="1"/>
</dbReference>
<name>SYFA_ECO5E</name>
<proteinExistence type="inferred from homology"/>
<keyword id="KW-0030">Aminoacyl-tRNA synthetase</keyword>
<keyword id="KW-0067">ATP-binding</keyword>
<keyword id="KW-0963">Cytoplasm</keyword>
<keyword id="KW-0436">Ligase</keyword>
<keyword id="KW-0460">Magnesium</keyword>
<keyword id="KW-0479">Metal-binding</keyword>
<keyword id="KW-0547">Nucleotide-binding</keyword>
<keyword id="KW-0648">Protein biosynthesis</keyword>
<accession>B5YQ02</accession>
<protein>
    <recommendedName>
        <fullName evidence="1">Phenylalanine--tRNA ligase alpha subunit</fullName>
        <ecNumber evidence="1">6.1.1.20</ecNumber>
    </recommendedName>
    <alternativeName>
        <fullName evidence="1">Phenylalanyl-tRNA synthetase alpha subunit</fullName>
        <shortName evidence="1">PheRS</shortName>
    </alternativeName>
</protein>
<gene>
    <name evidence="1" type="primary">pheS</name>
    <name type="ordered locus">ECH74115_2432</name>
</gene>
<comment type="catalytic activity">
    <reaction evidence="1">
        <text>tRNA(Phe) + L-phenylalanine + ATP = L-phenylalanyl-tRNA(Phe) + AMP + diphosphate + H(+)</text>
        <dbReference type="Rhea" id="RHEA:19413"/>
        <dbReference type="Rhea" id="RHEA-COMP:9668"/>
        <dbReference type="Rhea" id="RHEA-COMP:9699"/>
        <dbReference type="ChEBI" id="CHEBI:15378"/>
        <dbReference type="ChEBI" id="CHEBI:30616"/>
        <dbReference type="ChEBI" id="CHEBI:33019"/>
        <dbReference type="ChEBI" id="CHEBI:58095"/>
        <dbReference type="ChEBI" id="CHEBI:78442"/>
        <dbReference type="ChEBI" id="CHEBI:78531"/>
        <dbReference type="ChEBI" id="CHEBI:456215"/>
        <dbReference type="EC" id="6.1.1.20"/>
    </reaction>
</comment>
<comment type="cofactor">
    <cofactor evidence="1">
        <name>Mg(2+)</name>
        <dbReference type="ChEBI" id="CHEBI:18420"/>
    </cofactor>
    <text evidence="1">Binds 2 magnesium ions per tetramer.</text>
</comment>
<comment type="subunit">
    <text evidence="1">Tetramer of two alpha and two beta subunits.</text>
</comment>
<comment type="subcellular location">
    <subcellularLocation>
        <location evidence="1">Cytoplasm</location>
    </subcellularLocation>
</comment>
<comment type="similarity">
    <text evidence="1">Belongs to the class-II aminoacyl-tRNA synthetase family. Phe-tRNA synthetase alpha subunit type 1 subfamily.</text>
</comment>